<sequence>MTPVTTFPLVDAILAGRDRNLDGVILIAAQHLLQTTHAMLRSLFRVGLDPRNVAVIGKCYSTHPGVVDAMRADGIYVDDCSDAYAPHESFDTQYTRHVERFFAESWARLTAGRTARVVLLDDGGSLLAVAGAMLDASADVIGIEQTSAGYAKIVGCALGFPVINIARSSAKLLYESPIIAARVTQTAFERTAGIDSSAAILITGAGAIGTALADVLRPLHDRVDVYDTRSGCMTPIDLPNAIGGYDVIIGATGATSVPASMHELLRPGVLLMSASSSDREFDAVALRRRTTPNPDCHADLRVADGSVDATLLNSGFPVNFDGSPMCGDASMALTMALLAAAVLYASVAVADEMSSDHPHLGLIDQGDIVASFLNIDVPLQALSRLPLLSIDGYRRLQVRSGYTLFRQGERADHFFVIESGELEALVDGKVILRLGAGDHFGEACLLGGMRRIATVRACEPSVLWELDGKAFGDALHGDAAMREIAYGVARTRLMHAGASESLMV</sequence>
<comment type="subcellular location">
    <subcellularLocation>
        <location evidence="3">Cell membrane</location>
        <topology evidence="3">Multi-pass membrane protein</topology>
    </subcellularLocation>
</comment>
<evidence type="ECO:0000255" key="1"/>
<evidence type="ECO:0000255" key="2">
    <source>
        <dbReference type="PROSITE-ProRule" id="PRU00060"/>
    </source>
</evidence>
<evidence type="ECO:0000305" key="3"/>
<gene>
    <name type="ordered locus">Rv0104</name>
    <name type="ORF">MTCY251.23</name>
</gene>
<keyword id="KW-1003">Cell membrane</keyword>
<keyword id="KW-0472">Membrane</keyword>
<keyword id="KW-1185">Reference proteome</keyword>
<keyword id="KW-0812">Transmembrane</keyword>
<keyword id="KW-1133">Transmembrane helix</keyword>
<dbReference type="EMBL" id="AL123456">
    <property type="protein sequence ID" value="CCP42829.1"/>
    <property type="molecule type" value="Genomic_DNA"/>
</dbReference>
<dbReference type="PIR" id="H70751">
    <property type="entry name" value="H70751"/>
</dbReference>
<dbReference type="RefSeq" id="NP_214618.1">
    <property type="nucleotide sequence ID" value="NC_000962.3"/>
</dbReference>
<dbReference type="RefSeq" id="WP_003899813.1">
    <property type="nucleotide sequence ID" value="NZ_NVQJ01000053.1"/>
</dbReference>
<dbReference type="SMR" id="P9WM61"/>
<dbReference type="STRING" id="83332.Rv0104"/>
<dbReference type="PaxDb" id="83332-Rv0104"/>
<dbReference type="DNASU" id="886923"/>
<dbReference type="GeneID" id="886923"/>
<dbReference type="KEGG" id="mtu:Rv0104"/>
<dbReference type="KEGG" id="mtv:RVBD_0104"/>
<dbReference type="TubercuList" id="Rv0104"/>
<dbReference type="eggNOG" id="COG0499">
    <property type="taxonomic scope" value="Bacteria"/>
</dbReference>
<dbReference type="eggNOG" id="COG0664">
    <property type="taxonomic scope" value="Bacteria"/>
</dbReference>
<dbReference type="InParanoid" id="P9WM61"/>
<dbReference type="OrthoDB" id="180043at2"/>
<dbReference type="PHI-base" id="PHI:3639"/>
<dbReference type="Proteomes" id="UP000001584">
    <property type="component" value="Chromosome"/>
</dbReference>
<dbReference type="GO" id="GO:0005829">
    <property type="term" value="C:cytosol"/>
    <property type="evidence" value="ECO:0000318"/>
    <property type="project" value="GO_Central"/>
</dbReference>
<dbReference type="GO" id="GO:0005886">
    <property type="term" value="C:plasma membrane"/>
    <property type="evidence" value="ECO:0007669"/>
    <property type="project" value="UniProtKB-SubCell"/>
</dbReference>
<dbReference type="GO" id="GO:0003700">
    <property type="term" value="F:DNA-binding transcription factor activity"/>
    <property type="evidence" value="ECO:0000318"/>
    <property type="project" value="GO_Central"/>
</dbReference>
<dbReference type="CDD" id="cd00038">
    <property type="entry name" value="CAP_ED"/>
    <property type="match status" value="1"/>
</dbReference>
<dbReference type="Gene3D" id="3.40.50.1480">
    <property type="entry name" value="Adenosylhomocysteinase-like"/>
    <property type="match status" value="1"/>
</dbReference>
<dbReference type="Gene3D" id="2.60.120.10">
    <property type="entry name" value="Jelly Rolls"/>
    <property type="match status" value="1"/>
</dbReference>
<dbReference type="InterPro" id="IPR042172">
    <property type="entry name" value="Adenosylhomocyst_ase-like_sf"/>
</dbReference>
<dbReference type="InterPro" id="IPR000595">
    <property type="entry name" value="cNMP-bd_dom"/>
</dbReference>
<dbReference type="InterPro" id="IPR018490">
    <property type="entry name" value="cNMP-bd_dom_sf"/>
</dbReference>
<dbReference type="InterPro" id="IPR050397">
    <property type="entry name" value="Env_Response_Regulators"/>
</dbReference>
<dbReference type="InterPro" id="IPR036291">
    <property type="entry name" value="NAD(P)-bd_dom_sf"/>
</dbReference>
<dbReference type="InterPro" id="IPR014710">
    <property type="entry name" value="RmlC-like_jellyroll"/>
</dbReference>
<dbReference type="PANTHER" id="PTHR24567">
    <property type="entry name" value="CRP FAMILY TRANSCRIPTIONAL REGULATORY PROTEIN"/>
    <property type="match status" value="1"/>
</dbReference>
<dbReference type="PANTHER" id="PTHR24567:SF74">
    <property type="entry name" value="HTH-TYPE TRANSCRIPTIONAL REGULATOR ARCR"/>
    <property type="match status" value="1"/>
</dbReference>
<dbReference type="Pfam" id="PF00027">
    <property type="entry name" value="cNMP_binding"/>
    <property type="match status" value="1"/>
</dbReference>
<dbReference type="SMART" id="SM00100">
    <property type="entry name" value="cNMP"/>
    <property type="match status" value="1"/>
</dbReference>
<dbReference type="SUPFAM" id="SSF51206">
    <property type="entry name" value="cAMP-binding domain-like"/>
    <property type="match status" value="1"/>
</dbReference>
<dbReference type="SUPFAM" id="SSF52283">
    <property type="entry name" value="Formate/glycerate dehydrogenase catalytic domain-like"/>
    <property type="match status" value="1"/>
</dbReference>
<dbReference type="SUPFAM" id="SSF51735">
    <property type="entry name" value="NAD(P)-binding Rossmann-fold domains"/>
    <property type="match status" value="1"/>
</dbReference>
<dbReference type="PROSITE" id="PS50042">
    <property type="entry name" value="CNMP_BINDING_3"/>
    <property type="match status" value="1"/>
</dbReference>
<accession>P9WM61</accession>
<accession>L0T2G9</accession>
<accession>Q10898</accession>
<proteinExistence type="predicted"/>
<feature type="chain" id="PRO_0000103675" description="Uncharacterized protein Rv0104">
    <location>
        <begin position="1"/>
        <end position="504"/>
    </location>
</feature>
<feature type="transmembrane region" description="Helical" evidence="1">
    <location>
        <begin position="146"/>
        <end position="166"/>
    </location>
</feature>
<feature type="transmembrane region" description="Helical" evidence="1">
    <location>
        <begin position="196"/>
        <end position="216"/>
    </location>
</feature>
<feature type="transmembrane region" description="Helical" evidence="1">
    <location>
        <begin position="330"/>
        <end position="350"/>
    </location>
</feature>
<feature type="binding site" evidence="2">
    <location>
        <begin position="372"/>
        <end position="492"/>
    </location>
    <ligand>
        <name>a nucleoside 3',5'-cyclic phosphate</name>
        <dbReference type="ChEBI" id="CHEBI:58464"/>
    </ligand>
</feature>
<name>Y104_MYCTU</name>
<organism>
    <name type="scientific">Mycobacterium tuberculosis (strain ATCC 25618 / H37Rv)</name>
    <dbReference type="NCBI Taxonomy" id="83332"/>
    <lineage>
        <taxon>Bacteria</taxon>
        <taxon>Bacillati</taxon>
        <taxon>Actinomycetota</taxon>
        <taxon>Actinomycetes</taxon>
        <taxon>Mycobacteriales</taxon>
        <taxon>Mycobacteriaceae</taxon>
        <taxon>Mycobacterium</taxon>
        <taxon>Mycobacterium tuberculosis complex</taxon>
    </lineage>
</organism>
<protein>
    <recommendedName>
        <fullName>Uncharacterized protein Rv0104</fullName>
    </recommendedName>
</protein>
<reference key="1">
    <citation type="journal article" date="1998" name="Nature">
        <title>Deciphering the biology of Mycobacterium tuberculosis from the complete genome sequence.</title>
        <authorList>
            <person name="Cole S.T."/>
            <person name="Brosch R."/>
            <person name="Parkhill J."/>
            <person name="Garnier T."/>
            <person name="Churcher C.M."/>
            <person name="Harris D.E."/>
            <person name="Gordon S.V."/>
            <person name="Eiglmeier K."/>
            <person name="Gas S."/>
            <person name="Barry C.E. III"/>
            <person name="Tekaia F."/>
            <person name="Badcock K."/>
            <person name="Basham D."/>
            <person name="Brown D."/>
            <person name="Chillingworth T."/>
            <person name="Connor R."/>
            <person name="Davies R.M."/>
            <person name="Devlin K."/>
            <person name="Feltwell T."/>
            <person name="Gentles S."/>
            <person name="Hamlin N."/>
            <person name="Holroyd S."/>
            <person name="Hornsby T."/>
            <person name="Jagels K."/>
            <person name="Krogh A."/>
            <person name="McLean J."/>
            <person name="Moule S."/>
            <person name="Murphy L.D."/>
            <person name="Oliver S."/>
            <person name="Osborne J."/>
            <person name="Quail M.A."/>
            <person name="Rajandream M.A."/>
            <person name="Rogers J."/>
            <person name="Rutter S."/>
            <person name="Seeger K."/>
            <person name="Skelton S."/>
            <person name="Squares S."/>
            <person name="Squares R."/>
            <person name="Sulston J.E."/>
            <person name="Taylor K."/>
            <person name="Whitehead S."/>
            <person name="Barrell B.G."/>
        </authorList>
    </citation>
    <scope>NUCLEOTIDE SEQUENCE [LARGE SCALE GENOMIC DNA]</scope>
    <source>
        <strain>ATCC 25618 / H37Rv</strain>
    </source>
</reference>